<comment type="function">
    <text evidence="1">Catalyzes the reversible oxidation of malate to oxaloacetate.</text>
</comment>
<comment type="catalytic activity">
    <reaction evidence="1">
        <text>(S)-malate + NAD(+) = oxaloacetate + NADH + H(+)</text>
        <dbReference type="Rhea" id="RHEA:21432"/>
        <dbReference type="ChEBI" id="CHEBI:15378"/>
        <dbReference type="ChEBI" id="CHEBI:15589"/>
        <dbReference type="ChEBI" id="CHEBI:16452"/>
        <dbReference type="ChEBI" id="CHEBI:57540"/>
        <dbReference type="ChEBI" id="CHEBI:57945"/>
        <dbReference type="EC" id="1.1.1.37"/>
    </reaction>
</comment>
<comment type="subunit">
    <text evidence="1">Homodimer.</text>
</comment>
<comment type="similarity">
    <text evidence="1">Belongs to the LDH/MDH superfamily. MDH type 1 family.</text>
</comment>
<keyword id="KW-0520">NAD</keyword>
<keyword id="KW-0560">Oxidoreductase</keyword>
<keyword id="KW-0816">Tricarboxylic acid cycle</keyword>
<evidence type="ECO:0000255" key="1">
    <source>
        <dbReference type="HAMAP-Rule" id="MF_01516"/>
    </source>
</evidence>
<feature type="chain" id="PRO_1000185079" description="Malate dehydrogenase">
    <location>
        <begin position="1"/>
        <end position="312"/>
    </location>
</feature>
<feature type="active site" description="Proton acceptor" evidence="1">
    <location>
        <position position="177"/>
    </location>
</feature>
<feature type="binding site" evidence="1">
    <location>
        <begin position="7"/>
        <end position="13"/>
    </location>
    <ligand>
        <name>NAD(+)</name>
        <dbReference type="ChEBI" id="CHEBI:57540"/>
    </ligand>
</feature>
<feature type="binding site" evidence="1">
    <location>
        <position position="34"/>
    </location>
    <ligand>
        <name>NAD(+)</name>
        <dbReference type="ChEBI" id="CHEBI:57540"/>
    </ligand>
</feature>
<feature type="binding site" evidence="1">
    <location>
        <position position="81"/>
    </location>
    <ligand>
        <name>substrate</name>
    </ligand>
</feature>
<feature type="binding site" evidence="1">
    <location>
        <position position="87"/>
    </location>
    <ligand>
        <name>substrate</name>
    </ligand>
</feature>
<feature type="binding site" evidence="1">
    <location>
        <position position="94"/>
    </location>
    <ligand>
        <name>NAD(+)</name>
        <dbReference type="ChEBI" id="CHEBI:57540"/>
    </ligand>
</feature>
<feature type="binding site" evidence="1">
    <location>
        <begin position="117"/>
        <end position="119"/>
    </location>
    <ligand>
        <name>NAD(+)</name>
        <dbReference type="ChEBI" id="CHEBI:57540"/>
    </ligand>
</feature>
<feature type="binding site" evidence="1">
    <location>
        <position position="119"/>
    </location>
    <ligand>
        <name>substrate</name>
    </ligand>
</feature>
<feature type="binding site" evidence="1">
    <location>
        <position position="153"/>
    </location>
    <ligand>
        <name>substrate</name>
    </ligand>
</feature>
<feature type="binding site" evidence="1">
    <location>
        <position position="227"/>
    </location>
    <ligand>
        <name>NAD(+)</name>
        <dbReference type="ChEBI" id="CHEBI:57540"/>
    </ligand>
</feature>
<proteinExistence type="inferred from homology"/>
<gene>
    <name evidence="1" type="primary">mdh</name>
    <name type="ordered locus">SPC_3429</name>
</gene>
<accession>C0PZQ4</accession>
<sequence>MKVAVLGAAGGIGQALALLLKNQLPSGSELSLYDIAPVTPGVAVDLSHIPTAVKIKGFSGEDATPALEGADVVLISAGVARKPGMDRSDLFNVNAGIVKNLVQQIAKTCPKACVGIITNPVNTTVAIAAEVLKKAGVYDKNKLFGVTTLDIIRSNTFVAELKGKLPTEVEVPVIGGHSGVTILPLLSQIPGVSFTEQEAAELTKRIQNAGTEVVEAKAGGGSATLSMGQAAARFGLSLVRALQGEKGVVECAYVEGDGQYARFFSQPLLLGKNGVEERKSIGTLSAFEQHSLDAMLDTLKKDIQLGEDFINK</sequence>
<reference key="1">
    <citation type="journal article" date="2009" name="PLoS ONE">
        <title>Salmonella paratyphi C: genetic divergence from Salmonella choleraesuis and pathogenic convergence with Salmonella typhi.</title>
        <authorList>
            <person name="Liu W.-Q."/>
            <person name="Feng Y."/>
            <person name="Wang Y."/>
            <person name="Zou Q.-H."/>
            <person name="Chen F."/>
            <person name="Guo J.-T."/>
            <person name="Peng Y.-H."/>
            <person name="Jin Y."/>
            <person name="Li Y.-G."/>
            <person name="Hu S.-N."/>
            <person name="Johnston R.N."/>
            <person name="Liu G.-R."/>
            <person name="Liu S.-L."/>
        </authorList>
    </citation>
    <scope>NUCLEOTIDE SEQUENCE [LARGE SCALE GENOMIC DNA]</scope>
    <source>
        <strain>RKS4594</strain>
    </source>
</reference>
<name>MDH_SALPC</name>
<dbReference type="EC" id="1.1.1.37" evidence="1"/>
<dbReference type="EMBL" id="CP000857">
    <property type="protein sequence ID" value="ACN47514.1"/>
    <property type="molecule type" value="Genomic_DNA"/>
</dbReference>
<dbReference type="RefSeq" id="WP_000861586.1">
    <property type="nucleotide sequence ID" value="NC_012125.1"/>
</dbReference>
<dbReference type="SMR" id="C0PZQ4"/>
<dbReference type="KEGG" id="sei:SPC_3429"/>
<dbReference type="HOGENOM" id="CLU_047181_1_0_6"/>
<dbReference type="Proteomes" id="UP000001599">
    <property type="component" value="Chromosome"/>
</dbReference>
<dbReference type="GO" id="GO:0005737">
    <property type="term" value="C:cytoplasm"/>
    <property type="evidence" value="ECO:0007669"/>
    <property type="project" value="TreeGrafter"/>
</dbReference>
<dbReference type="GO" id="GO:0030060">
    <property type="term" value="F:L-malate dehydrogenase (NAD+) activity"/>
    <property type="evidence" value="ECO:0007669"/>
    <property type="project" value="UniProtKB-UniRule"/>
</dbReference>
<dbReference type="GO" id="GO:0006108">
    <property type="term" value="P:malate metabolic process"/>
    <property type="evidence" value="ECO:0007669"/>
    <property type="project" value="InterPro"/>
</dbReference>
<dbReference type="GO" id="GO:0006099">
    <property type="term" value="P:tricarboxylic acid cycle"/>
    <property type="evidence" value="ECO:0007669"/>
    <property type="project" value="UniProtKB-UniRule"/>
</dbReference>
<dbReference type="CDD" id="cd01337">
    <property type="entry name" value="MDH_glyoxysomal_mitochondrial"/>
    <property type="match status" value="1"/>
</dbReference>
<dbReference type="FunFam" id="3.40.50.720:FF:000017">
    <property type="entry name" value="Malate dehydrogenase"/>
    <property type="match status" value="1"/>
</dbReference>
<dbReference type="FunFam" id="3.90.110.10:FF:000001">
    <property type="entry name" value="Malate dehydrogenase"/>
    <property type="match status" value="1"/>
</dbReference>
<dbReference type="Gene3D" id="3.90.110.10">
    <property type="entry name" value="Lactate dehydrogenase/glycoside hydrolase, family 4, C-terminal"/>
    <property type="match status" value="1"/>
</dbReference>
<dbReference type="Gene3D" id="3.40.50.720">
    <property type="entry name" value="NAD(P)-binding Rossmann-like Domain"/>
    <property type="match status" value="1"/>
</dbReference>
<dbReference type="HAMAP" id="MF_01516">
    <property type="entry name" value="Malate_dehydrog_1"/>
    <property type="match status" value="1"/>
</dbReference>
<dbReference type="InterPro" id="IPR001557">
    <property type="entry name" value="L-lactate/malate_DH"/>
</dbReference>
<dbReference type="InterPro" id="IPR022383">
    <property type="entry name" value="Lactate/malate_DH_C"/>
</dbReference>
<dbReference type="InterPro" id="IPR001236">
    <property type="entry name" value="Lactate/malate_DH_N"/>
</dbReference>
<dbReference type="InterPro" id="IPR015955">
    <property type="entry name" value="Lactate_DH/Glyco_Ohase_4_C"/>
</dbReference>
<dbReference type="InterPro" id="IPR001252">
    <property type="entry name" value="Malate_DH_AS"/>
</dbReference>
<dbReference type="InterPro" id="IPR010097">
    <property type="entry name" value="Malate_DH_type1"/>
</dbReference>
<dbReference type="InterPro" id="IPR023958">
    <property type="entry name" value="Malate_DH_type1_bac"/>
</dbReference>
<dbReference type="InterPro" id="IPR036291">
    <property type="entry name" value="NAD(P)-bd_dom_sf"/>
</dbReference>
<dbReference type="NCBIfam" id="TIGR01772">
    <property type="entry name" value="MDH_euk_gproteo"/>
    <property type="match status" value="1"/>
</dbReference>
<dbReference type="PANTHER" id="PTHR11540">
    <property type="entry name" value="MALATE AND LACTATE DEHYDROGENASE"/>
    <property type="match status" value="1"/>
</dbReference>
<dbReference type="PANTHER" id="PTHR11540:SF16">
    <property type="entry name" value="MALATE DEHYDROGENASE, MITOCHONDRIAL"/>
    <property type="match status" value="1"/>
</dbReference>
<dbReference type="Pfam" id="PF02866">
    <property type="entry name" value="Ldh_1_C"/>
    <property type="match status" value="1"/>
</dbReference>
<dbReference type="Pfam" id="PF00056">
    <property type="entry name" value="Ldh_1_N"/>
    <property type="match status" value="1"/>
</dbReference>
<dbReference type="PIRSF" id="PIRSF000102">
    <property type="entry name" value="Lac_mal_DH"/>
    <property type="match status" value="1"/>
</dbReference>
<dbReference type="SUPFAM" id="SSF56327">
    <property type="entry name" value="LDH C-terminal domain-like"/>
    <property type="match status" value="1"/>
</dbReference>
<dbReference type="SUPFAM" id="SSF51735">
    <property type="entry name" value="NAD(P)-binding Rossmann-fold domains"/>
    <property type="match status" value="1"/>
</dbReference>
<dbReference type="PROSITE" id="PS00068">
    <property type="entry name" value="MDH"/>
    <property type="match status" value="1"/>
</dbReference>
<organism>
    <name type="scientific">Salmonella paratyphi C (strain RKS4594)</name>
    <dbReference type="NCBI Taxonomy" id="476213"/>
    <lineage>
        <taxon>Bacteria</taxon>
        <taxon>Pseudomonadati</taxon>
        <taxon>Pseudomonadota</taxon>
        <taxon>Gammaproteobacteria</taxon>
        <taxon>Enterobacterales</taxon>
        <taxon>Enterobacteriaceae</taxon>
        <taxon>Salmonella</taxon>
    </lineage>
</organism>
<protein>
    <recommendedName>
        <fullName evidence="1">Malate dehydrogenase</fullName>
        <ecNumber evidence="1">1.1.1.37</ecNumber>
    </recommendedName>
</protein>